<comment type="catalytic activity">
    <reaction evidence="1">
        <text>tRNA(Cys) + L-cysteine + ATP = L-cysteinyl-tRNA(Cys) + AMP + diphosphate</text>
        <dbReference type="Rhea" id="RHEA:17773"/>
        <dbReference type="Rhea" id="RHEA-COMP:9661"/>
        <dbReference type="Rhea" id="RHEA-COMP:9679"/>
        <dbReference type="ChEBI" id="CHEBI:30616"/>
        <dbReference type="ChEBI" id="CHEBI:33019"/>
        <dbReference type="ChEBI" id="CHEBI:35235"/>
        <dbReference type="ChEBI" id="CHEBI:78442"/>
        <dbReference type="ChEBI" id="CHEBI:78517"/>
        <dbReference type="ChEBI" id="CHEBI:456215"/>
        <dbReference type="EC" id="6.1.1.16"/>
    </reaction>
</comment>
<comment type="cofactor">
    <cofactor evidence="1">
        <name>Zn(2+)</name>
        <dbReference type="ChEBI" id="CHEBI:29105"/>
    </cofactor>
    <text evidence="1">Binds 1 zinc ion per subunit.</text>
</comment>
<comment type="subunit">
    <text evidence="1">Monomer.</text>
</comment>
<comment type="subcellular location">
    <subcellularLocation>
        <location evidence="1">Cytoplasm</location>
    </subcellularLocation>
</comment>
<comment type="similarity">
    <text evidence="1">Belongs to the class-I aminoacyl-tRNA synthetase family.</text>
</comment>
<gene>
    <name evidence="1" type="primary">cysS</name>
    <name type="ordered locus">glr0851</name>
</gene>
<name>SYC_GLOVI</name>
<accession>Q7NMB5</accession>
<evidence type="ECO:0000255" key="1">
    <source>
        <dbReference type="HAMAP-Rule" id="MF_00041"/>
    </source>
</evidence>
<organism>
    <name type="scientific">Gloeobacter violaceus (strain ATCC 29082 / PCC 7421)</name>
    <dbReference type="NCBI Taxonomy" id="251221"/>
    <lineage>
        <taxon>Bacteria</taxon>
        <taxon>Bacillati</taxon>
        <taxon>Cyanobacteriota</taxon>
        <taxon>Cyanophyceae</taxon>
        <taxon>Gloeobacterales</taxon>
        <taxon>Gloeobacteraceae</taxon>
        <taxon>Gloeobacter</taxon>
    </lineage>
</organism>
<feature type="chain" id="PRO_0000159403" description="Cysteine--tRNA ligase">
    <location>
        <begin position="1"/>
        <end position="482"/>
    </location>
</feature>
<feature type="short sequence motif" description="'HIGH' region">
    <location>
        <begin position="31"/>
        <end position="41"/>
    </location>
</feature>
<feature type="short sequence motif" description="'KMSKS' region">
    <location>
        <begin position="275"/>
        <end position="279"/>
    </location>
</feature>
<feature type="binding site" evidence="1">
    <location>
        <position position="29"/>
    </location>
    <ligand>
        <name>Zn(2+)</name>
        <dbReference type="ChEBI" id="CHEBI:29105"/>
    </ligand>
</feature>
<feature type="binding site" evidence="1">
    <location>
        <position position="213"/>
    </location>
    <ligand>
        <name>Zn(2+)</name>
        <dbReference type="ChEBI" id="CHEBI:29105"/>
    </ligand>
</feature>
<feature type="binding site" evidence="1">
    <location>
        <position position="238"/>
    </location>
    <ligand>
        <name>Zn(2+)</name>
        <dbReference type="ChEBI" id="CHEBI:29105"/>
    </ligand>
</feature>
<feature type="binding site" evidence="1">
    <location>
        <position position="242"/>
    </location>
    <ligand>
        <name>Zn(2+)</name>
        <dbReference type="ChEBI" id="CHEBI:29105"/>
    </ligand>
</feature>
<feature type="binding site" evidence="1">
    <location>
        <position position="278"/>
    </location>
    <ligand>
        <name>ATP</name>
        <dbReference type="ChEBI" id="CHEBI:30616"/>
    </ligand>
</feature>
<proteinExistence type="inferred from homology"/>
<keyword id="KW-0030">Aminoacyl-tRNA synthetase</keyword>
<keyword id="KW-0067">ATP-binding</keyword>
<keyword id="KW-0963">Cytoplasm</keyword>
<keyword id="KW-0436">Ligase</keyword>
<keyword id="KW-0479">Metal-binding</keyword>
<keyword id="KW-0547">Nucleotide-binding</keyword>
<keyword id="KW-0648">Protein biosynthesis</keyword>
<keyword id="KW-1185">Reference proteome</keyword>
<keyword id="KW-0862">Zinc</keyword>
<dbReference type="EC" id="6.1.1.16" evidence="1"/>
<dbReference type="EMBL" id="BA000045">
    <property type="protein sequence ID" value="BAC88792.1"/>
    <property type="molecule type" value="Genomic_DNA"/>
</dbReference>
<dbReference type="RefSeq" id="NP_923797.1">
    <property type="nucleotide sequence ID" value="NC_005125.1"/>
</dbReference>
<dbReference type="RefSeq" id="WP_011140853.1">
    <property type="nucleotide sequence ID" value="NC_005125.1"/>
</dbReference>
<dbReference type="SMR" id="Q7NMB5"/>
<dbReference type="FunCoup" id="Q7NMB5">
    <property type="interactions" value="283"/>
</dbReference>
<dbReference type="STRING" id="251221.gene:10758329"/>
<dbReference type="EnsemblBacteria" id="BAC88792">
    <property type="protein sequence ID" value="BAC88792"/>
    <property type="gene ID" value="BAC88792"/>
</dbReference>
<dbReference type="KEGG" id="gvi:glr0851"/>
<dbReference type="PATRIC" id="fig|251221.4.peg.868"/>
<dbReference type="eggNOG" id="COG0215">
    <property type="taxonomic scope" value="Bacteria"/>
</dbReference>
<dbReference type="HOGENOM" id="CLU_013528_0_1_3"/>
<dbReference type="InParanoid" id="Q7NMB5"/>
<dbReference type="OrthoDB" id="9815130at2"/>
<dbReference type="PhylomeDB" id="Q7NMB5"/>
<dbReference type="Proteomes" id="UP000000557">
    <property type="component" value="Chromosome"/>
</dbReference>
<dbReference type="GO" id="GO:0005737">
    <property type="term" value="C:cytoplasm"/>
    <property type="evidence" value="ECO:0000318"/>
    <property type="project" value="GO_Central"/>
</dbReference>
<dbReference type="GO" id="GO:0005829">
    <property type="term" value="C:cytosol"/>
    <property type="evidence" value="ECO:0000318"/>
    <property type="project" value="GO_Central"/>
</dbReference>
<dbReference type="GO" id="GO:0005524">
    <property type="term" value="F:ATP binding"/>
    <property type="evidence" value="ECO:0000318"/>
    <property type="project" value="GO_Central"/>
</dbReference>
<dbReference type="GO" id="GO:0004817">
    <property type="term" value="F:cysteine-tRNA ligase activity"/>
    <property type="evidence" value="ECO:0000318"/>
    <property type="project" value="GO_Central"/>
</dbReference>
<dbReference type="GO" id="GO:0008270">
    <property type="term" value="F:zinc ion binding"/>
    <property type="evidence" value="ECO:0007669"/>
    <property type="project" value="UniProtKB-UniRule"/>
</dbReference>
<dbReference type="GO" id="GO:0006423">
    <property type="term" value="P:cysteinyl-tRNA aminoacylation"/>
    <property type="evidence" value="ECO:0000318"/>
    <property type="project" value="GO_Central"/>
</dbReference>
<dbReference type="CDD" id="cd00672">
    <property type="entry name" value="CysRS_core"/>
    <property type="match status" value="1"/>
</dbReference>
<dbReference type="FunFam" id="3.40.50.620:FF:000009">
    <property type="entry name" value="Cysteine--tRNA ligase"/>
    <property type="match status" value="1"/>
</dbReference>
<dbReference type="Gene3D" id="1.20.120.1910">
    <property type="entry name" value="Cysteine-tRNA ligase, C-terminal anti-codon recognition domain"/>
    <property type="match status" value="1"/>
</dbReference>
<dbReference type="Gene3D" id="3.40.50.620">
    <property type="entry name" value="HUPs"/>
    <property type="match status" value="1"/>
</dbReference>
<dbReference type="HAMAP" id="MF_00041">
    <property type="entry name" value="Cys_tRNA_synth"/>
    <property type="match status" value="1"/>
</dbReference>
<dbReference type="InterPro" id="IPR015803">
    <property type="entry name" value="Cys-tRNA-ligase"/>
</dbReference>
<dbReference type="InterPro" id="IPR015273">
    <property type="entry name" value="Cys-tRNA-synt_Ia_DALR"/>
</dbReference>
<dbReference type="InterPro" id="IPR024909">
    <property type="entry name" value="Cys-tRNA/MSH_ligase"/>
</dbReference>
<dbReference type="InterPro" id="IPR056411">
    <property type="entry name" value="CysS_C"/>
</dbReference>
<dbReference type="InterPro" id="IPR014729">
    <property type="entry name" value="Rossmann-like_a/b/a_fold"/>
</dbReference>
<dbReference type="InterPro" id="IPR032678">
    <property type="entry name" value="tRNA-synt_1_cat_dom"/>
</dbReference>
<dbReference type="InterPro" id="IPR009080">
    <property type="entry name" value="tRNAsynth_Ia_anticodon-bd"/>
</dbReference>
<dbReference type="NCBIfam" id="TIGR00435">
    <property type="entry name" value="cysS"/>
    <property type="match status" value="1"/>
</dbReference>
<dbReference type="PANTHER" id="PTHR10890:SF3">
    <property type="entry name" value="CYSTEINE--TRNA LIGASE, CYTOPLASMIC"/>
    <property type="match status" value="1"/>
</dbReference>
<dbReference type="PANTHER" id="PTHR10890">
    <property type="entry name" value="CYSTEINYL-TRNA SYNTHETASE"/>
    <property type="match status" value="1"/>
</dbReference>
<dbReference type="Pfam" id="PF23493">
    <property type="entry name" value="CysS_C"/>
    <property type="match status" value="1"/>
</dbReference>
<dbReference type="Pfam" id="PF09190">
    <property type="entry name" value="DALR_2"/>
    <property type="match status" value="1"/>
</dbReference>
<dbReference type="Pfam" id="PF01406">
    <property type="entry name" value="tRNA-synt_1e"/>
    <property type="match status" value="1"/>
</dbReference>
<dbReference type="PRINTS" id="PR00983">
    <property type="entry name" value="TRNASYNTHCYS"/>
</dbReference>
<dbReference type="SMART" id="SM00840">
    <property type="entry name" value="DALR_2"/>
    <property type="match status" value="1"/>
</dbReference>
<dbReference type="SUPFAM" id="SSF47323">
    <property type="entry name" value="Anticodon-binding domain of a subclass of class I aminoacyl-tRNA synthetases"/>
    <property type="match status" value="1"/>
</dbReference>
<dbReference type="SUPFAM" id="SSF52374">
    <property type="entry name" value="Nucleotidylyl transferase"/>
    <property type="match status" value="1"/>
</dbReference>
<sequence>MALQIYNTLTRRKEPFVPLEAGTVKMYVCGVTVYDYCHLGHGRTYVVWDTVRRYLISRGYAVTYVQNFTDVDDKILRRAQQEGTTMEAVAEKYIAAYFEDMDRLNVLRADSYPRATQTMPEIGALIDRLTSIGYAYPAAGDVYYSVRRFAEYGKLSGKRLAELEAGASERLQDEELARKKDPFDFALWKGAKPGEPAWDSPWGAGRPGWHIECSAMVRKSLGETIDIHAGGEDLQFPHHENEIAQSEAVTGKPLARYWMHNAFLNVVNSSGAEEKMSKSLGNFKTLRDLFEVFPPMALRLFLLKTSYRNPIAFSAEAFKGSEQNWRELEEVLQLAGWIAGQGRPATDDIESEPWVRRFNEAMDDDFNTAAALAEVIALGKQLAGRYHAAIHGTPLADPARFAREWRTFALLCDILGLKAAEPEARQSALPEAEIEAQIALRRQAREERNWAEADRIRKQLLDQGIVLIDHKEKPTTWRHADP</sequence>
<protein>
    <recommendedName>
        <fullName evidence="1">Cysteine--tRNA ligase</fullName>
        <ecNumber evidence="1">6.1.1.16</ecNumber>
    </recommendedName>
    <alternativeName>
        <fullName evidence="1">Cysteinyl-tRNA synthetase</fullName>
        <shortName evidence="1">CysRS</shortName>
    </alternativeName>
</protein>
<reference key="1">
    <citation type="journal article" date="2003" name="DNA Res.">
        <title>Complete genome structure of Gloeobacter violaceus PCC 7421, a cyanobacterium that lacks thylakoids.</title>
        <authorList>
            <person name="Nakamura Y."/>
            <person name="Kaneko T."/>
            <person name="Sato S."/>
            <person name="Mimuro M."/>
            <person name="Miyashita H."/>
            <person name="Tsuchiya T."/>
            <person name="Sasamoto S."/>
            <person name="Watanabe A."/>
            <person name="Kawashima K."/>
            <person name="Kishida Y."/>
            <person name="Kiyokawa C."/>
            <person name="Kohara M."/>
            <person name="Matsumoto M."/>
            <person name="Matsuno A."/>
            <person name="Nakazaki N."/>
            <person name="Shimpo S."/>
            <person name="Takeuchi C."/>
            <person name="Yamada M."/>
            <person name="Tabata S."/>
        </authorList>
    </citation>
    <scope>NUCLEOTIDE SEQUENCE [LARGE SCALE GENOMIC DNA]</scope>
    <source>
        <strain>ATCC 29082 / PCC 7421</strain>
    </source>
</reference>